<organism>
    <name type="scientific">Glossina morsitans morsitans</name>
    <name type="common">Savannah tsetse fly</name>
    <dbReference type="NCBI Taxonomy" id="37546"/>
    <lineage>
        <taxon>Eukaryota</taxon>
        <taxon>Metazoa</taxon>
        <taxon>Ecdysozoa</taxon>
        <taxon>Arthropoda</taxon>
        <taxon>Hexapoda</taxon>
        <taxon>Insecta</taxon>
        <taxon>Pterygota</taxon>
        <taxon>Neoptera</taxon>
        <taxon>Endopterygota</taxon>
        <taxon>Diptera</taxon>
        <taxon>Brachycera</taxon>
        <taxon>Muscomorpha</taxon>
        <taxon>Hippoboscoidea</taxon>
        <taxon>Glossinidae</taxon>
        <taxon>Glossina</taxon>
    </lineage>
</organism>
<gene>
    <name type="primary">Sod2</name>
</gene>
<sequence>MSFLNRNLSRTIKAAVRGKHTLPKLPYDYGALAPIISKDILEVHHGKHHQTYVNNLNAVEEQMTEAHSKKDVNKVVELSKNYAFNWGGHLNHSIYWQNLSPTKSEPSADLKKAIEEQFSSFEQFKKDLSALSIGVQGSGWGWLGYNKKXKKLQILAVSNQEPLQAVTGLVPLFAIDVWEHAYYLQXKNXXAKYVEAXWDIANWKBISDRYAEATCN</sequence>
<reference key="1">
    <citation type="journal article" date="2005" name="Insect Mol. Biol.">
        <title>Antioxidant gene expression in the blood-feeding fly Glossina morsitans morsitans.</title>
        <authorList>
            <person name="Munks R.J."/>
            <person name="Sant'Anna M.R."/>
            <person name="Grail W."/>
            <person name="Gibson W."/>
            <person name="Igglesden T."/>
            <person name="Yoshiyama M."/>
            <person name="Lehane S.M."/>
            <person name="Lehane M.J."/>
        </authorList>
    </citation>
    <scope>NUCLEOTIDE SEQUENCE [MRNA]</scope>
</reference>
<accession>Q694A3</accession>
<protein>
    <recommendedName>
        <fullName>Superoxide dismutase [Mn], mitochondrial</fullName>
        <ecNumber>1.15.1.1</ecNumber>
    </recommendedName>
</protein>
<name>SODM_GLOMM</name>
<feature type="transit peptide" description="Mitochondrion" evidence="1">
    <location>
        <begin position="1"/>
        <end position="18"/>
    </location>
</feature>
<feature type="chain" id="PRO_0000291555" description="Superoxide dismutase [Mn], mitochondrial">
    <location>
        <begin position="19"/>
        <end position="216"/>
    </location>
</feature>
<feature type="binding site" evidence="1">
    <location>
        <position position="44"/>
    </location>
    <ligand>
        <name>Mn(2+)</name>
        <dbReference type="ChEBI" id="CHEBI:29035"/>
    </ligand>
</feature>
<feature type="binding site" evidence="1">
    <location>
        <position position="92"/>
    </location>
    <ligand>
        <name>Mn(2+)</name>
        <dbReference type="ChEBI" id="CHEBI:29035"/>
    </ligand>
</feature>
<feature type="binding site" evidence="1">
    <location>
        <position position="176"/>
    </location>
    <ligand>
        <name>Mn(2+)</name>
        <dbReference type="ChEBI" id="CHEBI:29035"/>
    </ligand>
</feature>
<feature type="binding site" evidence="1">
    <location>
        <position position="180"/>
    </location>
    <ligand>
        <name>Mn(2+)</name>
        <dbReference type="ChEBI" id="CHEBI:29035"/>
    </ligand>
</feature>
<comment type="function">
    <text>Destroys superoxide anion radicals which are normally produced within the cells and which are toxic to biological systems.</text>
</comment>
<comment type="catalytic activity">
    <reaction>
        <text>2 superoxide + 2 H(+) = H2O2 + O2</text>
        <dbReference type="Rhea" id="RHEA:20696"/>
        <dbReference type="ChEBI" id="CHEBI:15378"/>
        <dbReference type="ChEBI" id="CHEBI:15379"/>
        <dbReference type="ChEBI" id="CHEBI:16240"/>
        <dbReference type="ChEBI" id="CHEBI:18421"/>
        <dbReference type="EC" id="1.15.1.1"/>
    </reaction>
</comment>
<comment type="cofactor">
    <cofactor evidence="1">
        <name>Mn(2+)</name>
        <dbReference type="ChEBI" id="CHEBI:29035"/>
    </cofactor>
    <text evidence="1">Binds 1 Mn(2+) ion per subunit.</text>
</comment>
<comment type="subcellular location">
    <subcellularLocation>
        <location evidence="1">Mitochondrion matrix</location>
    </subcellularLocation>
</comment>
<comment type="similarity">
    <text evidence="2">Belongs to the iron/manganese superoxide dismutase family.</text>
</comment>
<dbReference type="EC" id="1.15.1.1"/>
<dbReference type="EMBL" id="AY625509">
    <property type="protein sequence ID" value="AAT85826.1"/>
    <property type="molecule type" value="mRNA"/>
</dbReference>
<dbReference type="STRING" id="37546.Q694A3"/>
<dbReference type="Proteomes" id="UP000092444">
    <property type="component" value="Unassembled WGS sequence"/>
</dbReference>
<dbReference type="GO" id="GO:0005759">
    <property type="term" value="C:mitochondrial matrix"/>
    <property type="evidence" value="ECO:0007669"/>
    <property type="project" value="UniProtKB-SubCell"/>
</dbReference>
<dbReference type="GO" id="GO:0030145">
    <property type="term" value="F:manganese ion binding"/>
    <property type="evidence" value="ECO:0007669"/>
    <property type="project" value="TreeGrafter"/>
</dbReference>
<dbReference type="GO" id="GO:0004784">
    <property type="term" value="F:superoxide dismutase activity"/>
    <property type="evidence" value="ECO:0007669"/>
    <property type="project" value="UniProtKB-EC"/>
</dbReference>
<dbReference type="FunFam" id="1.10.287.990:FF:000001">
    <property type="entry name" value="Superoxide dismutase"/>
    <property type="match status" value="1"/>
</dbReference>
<dbReference type="FunFam" id="3.55.40.20:FF:000004">
    <property type="entry name" value="Superoxide dismutase [Fe]"/>
    <property type="match status" value="1"/>
</dbReference>
<dbReference type="Gene3D" id="1.10.287.990">
    <property type="entry name" value="Fe,Mn superoxide dismutase (SOD) domain"/>
    <property type="match status" value="1"/>
</dbReference>
<dbReference type="Gene3D" id="3.55.40.20">
    <property type="entry name" value="Iron/manganese superoxide dismutase, C-terminal domain"/>
    <property type="match status" value="1"/>
</dbReference>
<dbReference type="InterPro" id="IPR050265">
    <property type="entry name" value="Fe/Mn_Superoxide_Dismutase"/>
</dbReference>
<dbReference type="InterPro" id="IPR001189">
    <property type="entry name" value="Mn/Fe_SOD"/>
</dbReference>
<dbReference type="InterPro" id="IPR019833">
    <property type="entry name" value="Mn/Fe_SOD_BS"/>
</dbReference>
<dbReference type="InterPro" id="IPR019832">
    <property type="entry name" value="Mn/Fe_SOD_C"/>
</dbReference>
<dbReference type="InterPro" id="IPR019831">
    <property type="entry name" value="Mn/Fe_SOD_N"/>
</dbReference>
<dbReference type="InterPro" id="IPR036324">
    <property type="entry name" value="Mn/Fe_SOD_N_sf"/>
</dbReference>
<dbReference type="InterPro" id="IPR036314">
    <property type="entry name" value="SOD_C_sf"/>
</dbReference>
<dbReference type="PANTHER" id="PTHR11404">
    <property type="entry name" value="SUPEROXIDE DISMUTASE 2"/>
    <property type="match status" value="1"/>
</dbReference>
<dbReference type="PANTHER" id="PTHR11404:SF6">
    <property type="entry name" value="SUPEROXIDE DISMUTASE [MN], MITOCHONDRIAL"/>
    <property type="match status" value="1"/>
</dbReference>
<dbReference type="Pfam" id="PF02777">
    <property type="entry name" value="Sod_Fe_C"/>
    <property type="match status" value="1"/>
</dbReference>
<dbReference type="Pfam" id="PF00081">
    <property type="entry name" value="Sod_Fe_N"/>
    <property type="match status" value="1"/>
</dbReference>
<dbReference type="PIRSF" id="PIRSF000349">
    <property type="entry name" value="SODismutase"/>
    <property type="match status" value="1"/>
</dbReference>
<dbReference type="PRINTS" id="PR01703">
    <property type="entry name" value="MNSODISMTASE"/>
</dbReference>
<dbReference type="SUPFAM" id="SSF54719">
    <property type="entry name" value="Fe,Mn superoxide dismutase (SOD), C-terminal domain"/>
    <property type="match status" value="1"/>
</dbReference>
<dbReference type="SUPFAM" id="SSF46609">
    <property type="entry name" value="Fe,Mn superoxide dismutase (SOD), N-terminal domain"/>
    <property type="match status" value="1"/>
</dbReference>
<dbReference type="PROSITE" id="PS00088">
    <property type="entry name" value="SOD_MN"/>
    <property type="match status" value="1"/>
</dbReference>
<proteinExistence type="evidence at transcript level"/>
<evidence type="ECO:0000250" key="1"/>
<evidence type="ECO:0000305" key="2"/>
<keyword id="KW-0464">Manganese</keyword>
<keyword id="KW-0479">Metal-binding</keyword>
<keyword id="KW-0496">Mitochondrion</keyword>
<keyword id="KW-0560">Oxidoreductase</keyword>
<keyword id="KW-0809">Transit peptide</keyword>